<accession>Q41351</accession>
<dbReference type="EMBL" id="L26605">
    <property type="protein sequence ID" value="AAA69018.1"/>
    <property type="molecule type" value="mRNA"/>
</dbReference>
<dbReference type="SMR" id="Q41351"/>
<dbReference type="GO" id="GO:0009507">
    <property type="term" value="C:chloroplast"/>
    <property type="evidence" value="ECO:0007669"/>
    <property type="project" value="UniProtKB-SubCell"/>
</dbReference>
<dbReference type="GO" id="GO:0016984">
    <property type="term" value="F:ribulose-bisphosphate carboxylase activity"/>
    <property type="evidence" value="ECO:0007669"/>
    <property type="project" value="UniProtKB-UniRule"/>
</dbReference>
<dbReference type="GO" id="GO:0009853">
    <property type="term" value="P:photorespiration"/>
    <property type="evidence" value="ECO:0007669"/>
    <property type="project" value="UniProtKB-KW"/>
</dbReference>
<dbReference type="GO" id="GO:0019253">
    <property type="term" value="P:reductive pentose-phosphate cycle"/>
    <property type="evidence" value="ECO:0007669"/>
    <property type="project" value="UniProtKB-UniRule"/>
</dbReference>
<dbReference type="CDD" id="cd03527">
    <property type="entry name" value="RuBisCO_small"/>
    <property type="match status" value="1"/>
</dbReference>
<dbReference type="FunFam" id="3.30.190.10:FF:000001">
    <property type="entry name" value="Ribulose bisphosphate carboxylase small chain, chloroplastic"/>
    <property type="match status" value="1"/>
</dbReference>
<dbReference type="Gene3D" id="3.30.190.10">
    <property type="entry name" value="Ribulose bisphosphate carboxylase, small subunit"/>
    <property type="match status" value="1"/>
</dbReference>
<dbReference type="HAMAP" id="MF_00859">
    <property type="entry name" value="RuBisCO_S_bact"/>
    <property type="match status" value="1"/>
</dbReference>
<dbReference type="InterPro" id="IPR024681">
    <property type="entry name" value="RuBisCO_ssu"/>
</dbReference>
<dbReference type="InterPro" id="IPR000894">
    <property type="entry name" value="RuBisCO_ssu_dom"/>
</dbReference>
<dbReference type="InterPro" id="IPR024680">
    <property type="entry name" value="RuBisCO_ssu_N"/>
</dbReference>
<dbReference type="InterPro" id="IPR036385">
    <property type="entry name" value="RuBisCO_ssu_sf"/>
</dbReference>
<dbReference type="PANTHER" id="PTHR31262">
    <property type="entry name" value="RIBULOSE BISPHOSPHATE CARBOXYLASE SMALL CHAIN 1, CHLOROPLASTIC"/>
    <property type="match status" value="1"/>
</dbReference>
<dbReference type="PANTHER" id="PTHR31262:SF10">
    <property type="entry name" value="RIBULOSE BISPHOSPHATE CARBOXYLASE SMALL SUBUNIT 1A, CHLOROPLASTIC-RELATED"/>
    <property type="match status" value="1"/>
</dbReference>
<dbReference type="Pfam" id="PF12338">
    <property type="entry name" value="RbcS"/>
    <property type="match status" value="1"/>
</dbReference>
<dbReference type="Pfam" id="PF00101">
    <property type="entry name" value="RuBisCO_small"/>
    <property type="match status" value="1"/>
</dbReference>
<dbReference type="PRINTS" id="PR00152">
    <property type="entry name" value="RUBISCOSMALL"/>
</dbReference>
<dbReference type="SMART" id="SM00961">
    <property type="entry name" value="RuBisCO_small"/>
    <property type="match status" value="1"/>
</dbReference>
<dbReference type="SUPFAM" id="SSF55239">
    <property type="entry name" value="RuBisCO, small subunit"/>
    <property type="match status" value="1"/>
</dbReference>
<organism>
    <name type="scientific">Stellaria longipes</name>
    <name type="common">Longstalk starwort</name>
    <name type="synonym">Alsine longipes</name>
    <dbReference type="NCBI Taxonomy" id="19744"/>
    <lineage>
        <taxon>Eukaryota</taxon>
        <taxon>Viridiplantae</taxon>
        <taxon>Streptophyta</taxon>
        <taxon>Embryophyta</taxon>
        <taxon>Tracheophyta</taxon>
        <taxon>Spermatophyta</taxon>
        <taxon>Magnoliopsida</taxon>
        <taxon>eudicotyledons</taxon>
        <taxon>Gunneridae</taxon>
        <taxon>Pentapetalae</taxon>
        <taxon>Caryophyllales</taxon>
        <taxon>Caryophyllaceae</taxon>
        <taxon>Alsineae</taxon>
        <taxon>Stellaria</taxon>
    </lineage>
</organism>
<gene>
    <name evidence="1" type="primary">RBCS</name>
</gene>
<evidence type="ECO:0000255" key="1">
    <source>
        <dbReference type="HAMAP-Rule" id="MF_00860"/>
    </source>
</evidence>
<proteinExistence type="evidence at transcript level"/>
<name>RBS_STELP</name>
<feature type="transit peptide" description="Chloroplast" evidence="1">
    <location>
        <begin position="1"/>
        <end position="56"/>
    </location>
</feature>
<feature type="chain" id="PRO_0000031559" description="Ribulose bisphosphate carboxylase small subunit, chloroplastic" evidence="1">
    <location>
        <begin position="57"/>
        <end position="180"/>
    </location>
</feature>
<sequence>MASSIMSSAAVATRSNGAQASMVAPFTGLKSNASFPVSRKTNLDITSIASNGGRVRCMQVWPPINMKKYETLSYLPDLSSEQLLSEIEYLLKNGWVPCLEFETEHGFVYREHTSSPGYYDGRYWTMWKLPMFGCTDATQVAAEVQEAKKAYPDAHIRIIGFDNVRQVQCISFIAYKPEAF</sequence>
<reference key="1">
    <citation type="journal article" date="1995" name="Plant Species Biol.">
        <title>Characterization and evolution of a cDNA encoding the small subunit of ribulose-1,5-bisphosphate carboxylase/oxygenase (rbcS) of Stellaria longipes (Caryophyllaceae).</title>
        <authorList>
            <person name="Zhang X.-H."/>
            <person name="Muhammad N."/>
            <person name="Chinnappa C.C."/>
        </authorList>
    </citation>
    <scope>NUCLEOTIDE SEQUENCE [MRNA]</scope>
    <source>
        <tissue>Leaf</tissue>
    </source>
</reference>
<keyword id="KW-0113">Calvin cycle</keyword>
<keyword id="KW-0120">Carbon dioxide fixation</keyword>
<keyword id="KW-0150">Chloroplast</keyword>
<keyword id="KW-0601">Photorespiration</keyword>
<keyword id="KW-0602">Photosynthesis</keyword>
<keyword id="KW-0934">Plastid</keyword>
<keyword id="KW-0809">Transit peptide</keyword>
<comment type="function">
    <text evidence="1">RuBisCO catalyzes two reactions: the carboxylation of D-ribulose 1,5-bisphosphate, the primary event in carbon dioxide fixation, as well as the oxidative fragmentation of the pentose substrate. Both reactions occur simultaneously and in competition at the same active site. Although the small subunit is not catalytic it is essential for maximal activity.</text>
</comment>
<comment type="subunit">
    <text evidence="1">Heterohexadecamer of 8 large and 8 small subunits.</text>
</comment>
<comment type="subcellular location">
    <subcellularLocation>
        <location evidence="1">Plastid</location>
        <location evidence="1">Chloroplast</location>
    </subcellularLocation>
</comment>
<comment type="miscellaneous">
    <text evidence="1">The basic functional RuBisCO is composed of a large chain homodimer in a 'head-to-tail' conformation. In form I RuBisCO this homodimer is arranged in a barrel-like tetramer with the small subunits forming a tetrameric 'cap' on each end of the 'barrel'.</text>
</comment>
<comment type="similarity">
    <text evidence="1">Belongs to the RuBisCO small chain family.</text>
</comment>
<protein>
    <recommendedName>
        <fullName evidence="1">Ribulose bisphosphate carboxylase small subunit, chloroplastic</fullName>
        <shortName evidence="1">RuBisCO small subunit</shortName>
    </recommendedName>
</protein>